<proteinExistence type="evidence at transcript level"/>
<sequence>MAFSKFGKMFRLPTIEIKKKTKQYNHLQRDVNPNDMWEIIGELGDGAFGKVYKAQNKETGVLAAAKVIETKSEEELEDYMVEIDILASCNHQYIVKLLDAFFFDNKLSIMIEFCPGGAVDAIMLELDRGLQEPQIRVICKQMLEALQYLHSMKIIHRDLKAGNILLTLDGDIKLADFGVSAKNTKTLQRRDSFIGTPYWMAPEVVMCETMKDAPYDYKADIWSLGITLIELAQIEPPHHELNPMRVLLKIAKSEPPGLDQPSKWSMDFNDFLKKALDRHPETRPTAAQLLEHPFVSSVNTNRPLRELVAEAKAEVMEEIEDNHEDGEDEDPADLTPVQAPTKDPSQTSATSLNGDHPHGTCYAETSMEIEEEPSTLESTKTPLKEQEDNLSDKFQVEDHDKPESEASGKASSSDSGIEDGKSTPTSEEDTKTVEASEPELPVQRTPTPAEEPEYPSETMEKYLEKPKEPEKEDHCEETQPVLKRIQLKDPNGRMSVVSNRSSFAGDDAESLVSHTNGRLSNRYSDVASDSMDISLNLSGDLSVNKEMGTISLRDSKKTLKRTRRFLVDGVEVSVTTSKIITDDEKKDEEMRFLRRQELRDLRLLQKEQHRSLTVLNMKLKEQREQMHRRFDQEMNAKKKYYYTELEALEKHQKQTIERMETEHSNSLREEGKRIRVEQEKAYQKFLDQMKQKKKEVKQEVEKMPRNQRKDTMKMKMNNYQQMRSDEEQKFIADQKEYLDVTLKSIISKNKHEISETERQCLLKKQNLVREREATLWDMEEKNLHERHQLHKQQLKDQYFLQRHQLLKKHEKEQEQMLHYNLRMVELLKARQQQERNRLPKIQRNEAKTRMVMFKKSLKINSSGSAAEDREKVKQFSRMEEKRQKAERLHQQQKHENQMREMLSQCDGNTRELQQLQNEKCHLLIENETQRLKSLDEQHNQQLKEWREHLKPRKKVLEDELTLRKRAGAFLQDDG</sequence>
<accession>Q7SY52</accession>
<comment type="function">
    <text evidence="1">May act as a polo kinase kinase by mediating phosphorylation of plk1.</text>
</comment>
<comment type="catalytic activity">
    <reaction>
        <text>L-seryl-[protein] + ATP = O-phospho-L-seryl-[protein] + ADP + H(+)</text>
        <dbReference type="Rhea" id="RHEA:17989"/>
        <dbReference type="Rhea" id="RHEA-COMP:9863"/>
        <dbReference type="Rhea" id="RHEA-COMP:11604"/>
        <dbReference type="ChEBI" id="CHEBI:15378"/>
        <dbReference type="ChEBI" id="CHEBI:29999"/>
        <dbReference type="ChEBI" id="CHEBI:30616"/>
        <dbReference type="ChEBI" id="CHEBI:83421"/>
        <dbReference type="ChEBI" id="CHEBI:456216"/>
        <dbReference type="EC" id="2.7.11.1"/>
    </reaction>
</comment>
<comment type="catalytic activity">
    <reaction>
        <text>L-threonyl-[protein] + ATP = O-phospho-L-threonyl-[protein] + ADP + H(+)</text>
        <dbReference type="Rhea" id="RHEA:46608"/>
        <dbReference type="Rhea" id="RHEA-COMP:11060"/>
        <dbReference type="Rhea" id="RHEA-COMP:11605"/>
        <dbReference type="ChEBI" id="CHEBI:15378"/>
        <dbReference type="ChEBI" id="CHEBI:30013"/>
        <dbReference type="ChEBI" id="CHEBI:30616"/>
        <dbReference type="ChEBI" id="CHEBI:61977"/>
        <dbReference type="ChEBI" id="CHEBI:456216"/>
        <dbReference type="EC" id="2.7.11.1"/>
    </reaction>
</comment>
<comment type="subunit">
    <text evidence="1">Homodimer.</text>
</comment>
<comment type="subcellular location">
    <subcellularLocation>
        <location evidence="1">Cell membrane</location>
        <topology evidence="1">Peripheral membrane protein</topology>
    </subcellularLocation>
</comment>
<comment type="PTM">
    <text evidence="1">Autophosphorylates.</text>
</comment>
<comment type="similarity">
    <text evidence="6">Belongs to the protein kinase superfamily. STE Ser/Thr protein kinase family. STE20 subfamily.</text>
</comment>
<gene>
    <name type="primary">stk10</name>
    <name type="ORF">zgc:63495</name>
</gene>
<dbReference type="EC" id="2.7.11.1"/>
<dbReference type="EMBL" id="BC055124">
    <property type="protein sequence ID" value="AAH55124.1"/>
    <property type="molecule type" value="mRNA"/>
</dbReference>
<dbReference type="RefSeq" id="NP_957427.1">
    <property type="nucleotide sequence ID" value="NM_201133.1"/>
</dbReference>
<dbReference type="SMR" id="Q7SY52"/>
<dbReference type="FunCoup" id="Q7SY52">
    <property type="interactions" value="1457"/>
</dbReference>
<dbReference type="STRING" id="7955.ENSDARP00000131896"/>
<dbReference type="PaxDb" id="7955-ENSDARP00000103060"/>
<dbReference type="GeneID" id="394108"/>
<dbReference type="KEGG" id="dre:394108"/>
<dbReference type="AGR" id="ZFIN:ZDB-GENE-040426-1136"/>
<dbReference type="CTD" id="6793"/>
<dbReference type="ZFIN" id="ZDB-GENE-040426-1136">
    <property type="gene designation" value="stk10"/>
</dbReference>
<dbReference type="eggNOG" id="KOG0579">
    <property type="taxonomic scope" value="Eukaryota"/>
</dbReference>
<dbReference type="InParanoid" id="Q7SY52"/>
<dbReference type="OrthoDB" id="10027016at2759"/>
<dbReference type="PhylomeDB" id="Q7SY52"/>
<dbReference type="Reactome" id="R-DRE-6798695">
    <property type="pathway name" value="Neutrophil degranulation"/>
</dbReference>
<dbReference type="Reactome" id="R-DRE-8980692">
    <property type="pathway name" value="RHOA GTPase cycle"/>
</dbReference>
<dbReference type="PRO" id="PR:Q7SY52"/>
<dbReference type="Proteomes" id="UP000000437">
    <property type="component" value="Chromosome 21"/>
</dbReference>
<dbReference type="GO" id="GO:0005737">
    <property type="term" value="C:cytoplasm"/>
    <property type="evidence" value="ECO:0000318"/>
    <property type="project" value="GO_Central"/>
</dbReference>
<dbReference type="GO" id="GO:0005886">
    <property type="term" value="C:plasma membrane"/>
    <property type="evidence" value="ECO:0000250"/>
    <property type="project" value="UniProtKB"/>
</dbReference>
<dbReference type="GO" id="GO:0005524">
    <property type="term" value="F:ATP binding"/>
    <property type="evidence" value="ECO:0007669"/>
    <property type="project" value="UniProtKB-KW"/>
</dbReference>
<dbReference type="GO" id="GO:0042803">
    <property type="term" value="F:protein homodimerization activity"/>
    <property type="evidence" value="ECO:0000250"/>
    <property type="project" value="UniProtKB"/>
</dbReference>
<dbReference type="GO" id="GO:0106310">
    <property type="term" value="F:protein serine kinase activity"/>
    <property type="evidence" value="ECO:0007669"/>
    <property type="project" value="RHEA"/>
</dbReference>
<dbReference type="GO" id="GO:0004674">
    <property type="term" value="F:protein serine/threonine kinase activity"/>
    <property type="evidence" value="ECO:0000250"/>
    <property type="project" value="UniProtKB"/>
</dbReference>
<dbReference type="GO" id="GO:0035556">
    <property type="term" value="P:intracellular signal transduction"/>
    <property type="evidence" value="ECO:0000318"/>
    <property type="project" value="GO_Central"/>
</dbReference>
<dbReference type="GO" id="GO:0046777">
    <property type="term" value="P:protein autophosphorylation"/>
    <property type="evidence" value="ECO:0000250"/>
    <property type="project" value="UniProtKB"/>
</dbReference>
<dbReference type="GO" id="GO:2000401">
    <property type="term" value="P:regulation of lymphocyte migration"/>
    <property type="evidence" value="ECO:0000250"/>
    <property type="project" value="UniProtKB"/>
</dbReference>
<dbReference type="CDD" id="cd06644">
    <property type="entry name" value="STKc_STK10"/>
    <property type="match status" value="1"/>
</dbReference>
<dbReference type="FunFam" id="1.10.510.10:FF:000081">
    <property type="entry name" value="STE20-like serine/threonine-protein kinase"/>
    <property type="match status" value="1"/>
</dbReference>
<dbReference type="FunFam" id="3.30.200.20:FF:000120">
    <property type="entry name" value="STE20-like serine/threonine-protein kinase"/>
    <property type="match status" value="1"/>
</dbReference>
<dbReference type="Gene3D" id="3.30.200.20">
    <property type="entry name" value="Phosphorylase Kinase, domain 1"/>
    <property type="match status" value="1"/>
</dbReference>
<dbReference type="Gene3D" id="1.10.510.10">
    <property type="entry name" value="Transferase(Phosphotransferase) domain 1"/>
    <property type="match status" value="1"/>
</dbReference>
<dbReference type="InterPro" id="IPR011009">
    <property type="entry name" value="Kinase-like_dom_sf"/>
</dbReference>
<dbReference type="InterPro" id="IPR022165">
    <property type="entry name" value="PKK"/>
</dbReference>
<dbReference type="InterPro" id="IPR000719">
    <property type="entry name" value="Prot_kinase_dom"/>
</dbReference>
<dbReference type="InterPro" id="IPR017441">
    <property type="entry name" value="Protein_kinase_ATP_BS"/>
</dbReference>
<dbReference type="InterPro" id="IPR008271">
    <property type="entry name" value="Ser/Thr_kinase_AS"/>
</dbReference>
<dbReference type="InterPro" id="IPR051585">
    <property type="entry name" value="STE20_Ser/Thr_Kinases"/>
</dbReference>
<dbReference type="InterPro" id="IPR042743">
    <property type="entry name" value="STK10_STKc"/>
</dbReference>
<dbReference type="PANTHER" id="PTHR46538:SF2">
    <property type="entry name" value="NON-SPECIFIC SERINE_THREONINE PROTEIN KINASE"/>
    <property type="match status" value="1"/>
</dbReference>
<dbReference type="PANTHER" id="PTHR46538">
    <property type="entry name" value="PROTEIN KINASE DOMAIN-CONTAINING PROTEIN"/>
    <property type="match status" value="1"/>
</dbReference>
<dbReference type="Pfam" id="PF00069">
    <property type="entry name" value="Pkinase"/>
    <property type="match status" value="1"/>
</dbReference>
<dbReference type="Pfam" id="PF12474">
    <property type="entry name" value="PKK"/>
    <property type="match status" value="2"/>
</dbReference>
<dbReference type="SMART" id="SM00220">
    <property type="entry name" value="S_TKc"/>
    <property type="match status" value="1"/>
</dbReference>
<dbReference type="SUPFAM" id="SSF56112">
    <property type="entry name" value="Protein kinase-like (PK-like)"/>
    <property type="match status" value="1"/>
</dbReference>
<dbReference type="PROSITE" id="PS00107">
    <property type="entry name" value="PROTEIN_KINASE_ATP"/>
    <property type="match status" value="1"/>
</dbReference>
<dbReference type="PROSITE" id="PS50011">
    <property type="entry name" value="PROTEIN_KINASE_DOM"/>
    <property type="match status" value="1"/>
</dbReference>
<dbReference type="PROSITE" id="PS00108">
    <property type="entry name" value="PROTEIN_KINASE_ST"/>
    <property type="match status" value="1"/>
</dbReference>
<feature type="chain" id="PRO_0000414713" description="Serine/threonine-protein kinase 10">
    <location>
        <begin position="1"/>
        <end position="974"/>
    </location>
</feature>
<feature type="domain" description="Protein kinase" evidence="3">
    <location>
        <begin position="37"/>
        <end position="295"/>
    </location>
</feature>
<feature type="region of interest" description="Disordered" evidence="5">
    <location>
        <begin position="320"/>
        <end position="479"/>
    </location>
</feature>
<feature type="coiled-coil region" evidence="2">
    <location>
        <begin position="605"/>
        <end position="729"/>
    </location>
</feature>
<feature type="coiled-coil region" evidence="2">
    <location>
        <begin position="870"/>
        <end position="950"/>
    </location>
</feature>
<feature type="compositionally biased region" description="Acidic residues" evidence="5">
    <location>
        <begin position="320"/>
        <end position="332"/>
    </location>
</feature>
<feature type="compositionally biased region" description="Polar residues" evidence="5">
    <location>
        <begin position="343"/>
        <end position="353"/>
    </location>
</feature>
<feature type="compositionally biased region" description="Basic and acidic residues" evidence="5">
    <location>
        <begin position="382"/>
        <end position="406"/>
    </location>
</feature>
<feature type="compositionally biased region" description="Basic and acidic residues" evidence="5">
    <location>
        <begin position="458"/>
        <end position="477"/>
    </location>
</feature>
<feature type="active site" description="Proton acceptor" evidence="3 4">
    <location>
        <position position="158"/>
    </location>
</feature>
<feature type="binding site" evidence="3">
    <location>
        <begin position="43"/>
        <end position="51"/>
    </location>
    <ligand>
        <name>ATP</name>
        <dbReference type="ChEBI" id="CHEBI:30616"/>
    </ligand>
</feature>
<feature type="binding site" evidence="3">
    <location>
        <position position="66"/>
    </location>
    <ligand>
        <name>ATP</name>
        <dbReference type="ChEBI" id="CHEBI:30616"/>
    </ligand>
</feature>
<keyword id="KW-0067">ATP-binding</keyword>
<keyword id="KW-0131">Cell cycle</keyword>
<keyword id="KW-1003">Cell membrane</keyword>
<keyword id="KW-0175">Coiled coil</keyword>
<keyword id="KW-0418">Kinase</keyword>
<keyword id="KW-0472">Membrane</keyword>
<keyword id="KW-0547">Nucleotide-binding</keyword>
<keyword id="KW-0597">Phosphoprotein</keyword>
<keyword id="KW-1185">Reference proteome</keyword>
<keyword id="KW-0723">Serine/threonine-protein kinase</keyword>
<keyword id="KW-0808">Transferase</keyword>
<evidence type="ECO:0000250" key="1"/>
<evidence type="ECO:0000255" key="2"/>
<evidence type="ECO:0000255" key="3">
    <source>
        <dbReference type="PROSITE-ProRule" id="PRU00159"/>
    </source>
</evidence>
<evidence type="ECO:0000255" key="4">
    <source>
        <dbReference type="PROSITE-ProRule" id="PRU10027"/>
    </source>
</evidence>
<evidence type="ECO:0000256" key="5">
    <source>
        <dbReference type="SAM" id="MobiDB-lite"/>
    </source>
</evidence>
<evidence type="ECO:0000305" key="6"/>
<reference key="1">
    <citation type="submission" date="2003-07" db="EMBL/GenBank/DDBJ databases">
        <authorList>
            <consortium name="NIH - Zebrafish Gene Collection (ZGC) project"/>
        </authorList>
    </citation>
    <scope>NUCLEOTIDE SEQUENCE [LARGE SCALE MRNA]</scope>
    <source>
        <strain>AB</strain>
    </source>
</reference>
<organism>
    <name type="scientific">Danio rerio</name>
    <name type="common">Zebrafish</name>
    <name type="synonym">Brachydanio rerio</name>
    <dbReference type="NCBI Taxonomy" id="7955"/>
    <lineage>
        <taxon>Eukaryota</taxon>
        <taxon>Metazoa</taxon>
        <taxon>Chordata</taxon>
        <taxon>Craniata</taxon>
        <taxon>Vertebrata</taxon>
        <taxon>Euteleostomi</taxon>
        <taxon>Actinopterygii</taxon>
        <taxon>Neopterygii</taxon>
        <taxon>Teleostei</taxon>
        <taxon>Ostariophysi</taxon>
        <taxon>Cypriniformes</taxon>
        <taxon>Danionidae</taxon>
        <taxon>Danioninae</taxon>
        <taxon>Danio</taxon>
    </lineage>
</organism>
<name>STK10_DANRE</name>
<protein>
    <recommendedName>
        <fullName>Serine/threonine-protein kinase 10</fullName>
        <ecNumber>2.7.11.1</ecNumber>
    </recommendedName>
</protein>